<feature type="chain" id="PRO_1000086220" description="Anaerobic nitric oxide reductase flavorubredoxin">
    <location>
        <begin position="1"/>
        <end position="479"/>
    </location>
</feature>
<feature type="domain" description="Flavodoxin-like" evidence="1">
    <location>
        <begin position="254"/>
        <end position="393"/>
    </location>
</feature>
<feature type="domain" description="Rubredoxin-like" evidence="1">
    <location>
        <begin position="423"/>
        <end position="474"/>
    </location>
</feature>
<feature type="region of interest" description="Zinc metallo-hydrolase">
    <location>
        <begin position="30"/>
        <end position="210"/>
    </location>
</feature>
<feature type="binding site" evidence="1">
    <location>
        <position position="79"/>
    </location>
    <ligand>
        <name>Fe cation</name>
        <dbReference type="ChEBI" id="CHEBI:24875"/>
        <label>1</label>
    </ligand>
</feature>
<feature type="binding site" evidence="1">
    <location>
        <position position="81"/>
    </location>
    <ligand>
        <name>Fe cation</name>
        <dbReference type="ChEBI" id="CHEBI:24875"/>
        <label>1</label>
    </ligand>
</feature>
<feature type="binding site" evidence="1">
    <location>
        <position position="83"/>
    </location>
    <ligand>
        <name>Fe cation</name>
        <dbReference type="ChEBI" id="CHEBI:24875"/>
        <label>2</label>
    </ligand>
</feature>
<feature type="binding site" evidence="1">
    <location>
        <position position="147"/>
    </location>
    <ligand>
        <name>Fe cation</name>
        <dbReference type="ChEBI" id="CHEBI:24875"/>
        <label>1</label>
    </ligand>
</feature>
<feature type="binding site" evidence="1">
    <location>
        <position position="166"/>
    </location>
    <ligand>
        <name>Fe cation</name>
        <dbReference type="ChEBI" id="CHEBI:24875"/>
        <label>1</label>
    </ligand>
</feature>
<feature type="binding site" evidence="1">
    <location>
        <position position="166"/>
    </location>
    <ligand>
        <name>Fe cation</name>
        <dbReference type="ChEBI" id="CHEBI:24875"/>
        <label>2</label>
    </ligand>
</feature>
<feature type="binding site" evidence="1">
    <location>
        <position position="227"/>
    </location>
    <ligand>
        <name>Fe cation</name>
        <dbReference type="ChEBI" id="CHEBI:24875"/>
        <label>2</label>
    </ligand>
</feature>
<feature type="binding site" evidence="1">
    <location>
        <begin position="260"/>
        <end position="264"/>
    </location>
    <ligand>
        <name>FMN</name>
        <dbReference type="ChEBI" id="CHEBI:58210"/>
    </ligand>
</feature>
<feature type="binding site" evidence="1">
    <location>
        <begin position="342"/>
        <end position="369"/>
    </location>
    <ligand>
        <name>FMN</name>
        <dbReference type="ChEBI" id="CHEBI:58210"/>
    </ligand>
</feature>
<feature type="binding site" evidence="1">
    <location>
        <position position="428"/>
    </location>
    <ligand>
        <name>Fe cation</name>
        <dbReference type="ChEBI" id="CHEBI:24875"/>
        <label>3</label>
    </ligand>
</feature>
<feature type="binding site" evidence="1">
    <location>
        <position position="431"/>
    </location>
    <ligand>
        <name>Fe cation</name>
        <dbReference type="ChEBI" id="CHEBI:24875"/>
        <label>3</label>
    </ligand>
</feature>
<feature type="binding site" evidence="1">
    <location>
        <position position="461"/>
    </location>
    <ligand>
        <name>Fe cation</name>
        <dbReference type="ChEBI" id="CHEBI:24875"/>
        <label>3</label>
    </ligand>
</feature>
<feature type="binding site" evidence="1">
    <location>
        <position position="464"/>
    </location>
    <ligand>
        <name>Fe cation</name>
        <dbReference type="ChEBI" id="CHEBI:24875"/>
        <label>3</label>
    </ligand>
</feature>
<dbReference type="EMBL" id="CP000886">
    <property type="protein sequence ID" value="ABX68872.1"/>
    <property type="molecule type" value="Genomic_DNA"/>
</dbReference>
<dbReference type="RefSeq" id="WP_000026012.1">
    <property type="nucleotide sequence ID" value="NC_010102.1"/>
</dbReference>
<dbReference type="SMR" id="A9N0D9"/>
<dbReference type="KEGG" id="spq:SPAB_03531"/>
<dbReference type="PATRIC" id="fig|1016998.12.peg.3324"/>
<dbReference type="HOGENOM" id="CLU_017490_0_1_6"/>
<dbReference type="BioCyc" id="SENT1016998:SPAB_RS14385-MONOMER"/>
<dbReference type="UniPathway" id="UPA00638"/>
<dbReference type="Proteomes" id="UP000008556">
    <property type="component" value="Chromosome"/>
</dbReference>
<dbReference type="GO" id="GO:0005737">
    <property type="term" value="C:cytoplasm"/>
    <property type="evidence" value="ECO:0007669"/>
    <property type="project" value="UniProtKB-SubCell"/>
</dbReference>
<dbReference type="GO" id="GO:0009055">
    <property type="term" value="F:electron transfer activity"/>
    <property type="evidence" value="ECO:0007669"/>
    <property type="project" value="UniProtKB-UniRule"/>
</dbReference>
<dbReference type="GO" id="GO:0010181">
    <property type="term" value="F:FMN binding"/>
    <property type="evidence" value="ECO:0007669"/>
    <property type="project" value="InterPro"/>
</dbReference>
<dbReference type="GO" id="GO:0005506">
    <property type="term" value="F:iron ion binding"/>
    <property type="evidence" value="ECO:0007669"/>
    <property type="project" value="InterPro"/>
</dbReference>
<dbReference type="GO" id="GO:0016966">
    <property type="term" value="F:nitric oxide reductase activity"/>
    <property type="evidence" value="ECO:0007669"/>
    <property type="project" value="InterPro"/>
</dbReference>
<dbReference type="CDD" id="cd07709">
    <property type="entry name" value="flavodiiron_proteins_MBL-fold"/>
    <property type="match status" value="1"/>
</dbReference>
<dbReference type="CDD" id="cd00730">
    <property type="entry name" value="rubredoxin"/>
    <property type="match status" value="1"/>
</dbReference>
<dbReference type="FunFam" id="3.40.50.360:FF:000012">
    <property type="entry name" value="Anaerobic nitric oxide reductase flavorubredoxin"/>
    <property type="match status" value="1"/>
</dbReference>
<dbReference type="FunFam" id="3.60.15.10:FF:000009">
    <property type="entry name" value="Anaerobic nitric oxide reductase flavorubredoxin"/>
    <property type="match status" value="1"/>
</dbReference>
<dbReference type="Gene3D" id="2.20.28.10">
    <property type="match status" value="1"/>
</dbReference>
<dbReference type="Gene3D" id="3.40.50.360">
    <property type="match status" value="1"/>
</dbReference>
<dbReference type="Gene3D" id="3.60.15.10">
    <property type="entry name" value="Ribonuclease Z/Hydroxyacylglutathione hydrolase-like"/>
    <property type="match status" value="1"/>
</dbReference>
<dbReference type="HAMAP" id="MF_01312">
    <property type="entry name" value="NorV"/>
    <property type="match status" value="1"/>
</dbReference>
<dbReference type="InterPro" id="IPR023957">
    <property type="entry name" value="Anaer_NO_rdtase_flvorubredoxin"/>
</dbReference>
<dbReference type="InterPro" id="IPR008254">
    <property type="entry name" value="Flavodoxin/NO_synth"/>
</dbReference>
<dbReference type="InterPro" id="IPR029039">
    <property type="entry name" value="Flavoprotein-like_sf"/>
</dbReference>
<dbReference type="InterPro" id="IPR001279">
    <property type="entry name" value="Metallo-B-lactamas"/>
</dbReference>
<dbReference type="InterPro" id="IPR045761">
    <property type="entry name" value="ODP_dom"/>
</dbReference>
<dbReference type="InterPro" id="IPR036866">
    <property type="entry name" value="RibonucZ/Hydroxyglut_hydro"/>
</dbReference>
<dbReference type="InterPro" id="IPR024934">
    <property type="entry name" value="Rubredoxin-like_dom"/>
</dbReference>
<dbReference type="InterPro" id="IPR016440">
    <property type="entry name" value="Rubredoxin-O_OxRdtase"/>
</dbReference>
<dbReference type="InterPro" id="IPR024935">
    <property type="entry name" value="Rubredoxin_dom"/>
</dbReference>
<dbReference type="NCBIfam" id="NF003954">
    <property type="entry name" value="PRK05452.1"/>
    <property type="match status" value="1"/>
</dbReference>
<dbReference type="PANTHER" id="PTHR43717">
    <property type="entry name" value="ANAEROBIC NITRIC OXIDE REDUCTASE FLAVORUBREDOXIN"/>
    <property type="match status" value="1"/>
</dbReference>
<dbReference type="PANTHER" id="PTHR43717:SF1">
    <property type="entry name" value="ANAEROBIC NITRIC OXIDE REDUCTASE FLAVORUBREDOXIN"/>
    <property type="match status" value="1"/>
</dbReference>
<dbReference type="Pfam" id="PF00258">
    <property type="entry name" value="Flavodoxin_1"/>
    <property type="match status" value="1"/>
</dbReference>
<dbReference type="Pfam" id="PF19583">
    <property type="entry name" value="ODP"/>
    <property type="match status" value="1"/>
</dbReference>
<dbReference type="Pfam" id="PF00301">
    <property type="entry name" value="Rubredoxin"/>
    <property type="match status" value="1"/>
</dbReference>
<dbReference type="PIRSF" id="PIRSF005243">
    <property type="entry name" value="ROO"/>
    <property type="match status" value="1"/>
</dbReference>
<dbReference type="PRINTS" id="PR00163">
    <property type="entry name" value="RUBREDOXIN"/>
</dbReference>
<dbReference type="SMART" id="SM00849">
    <property type="entry name" value="Lactamase_B"/>
    <property type="match status" value="1"/>
</dbReference>
<dbReference type="SUPFAM" id="SSF52218">
    <property type="entry name" value="Flavoproteins"/>
    <property type="match status" value="1"/>
</dbReference>
<dbReference type="SUPFAM" id="SSF56281">
    <property type="entry name" value="Metallo-hydrolase/oxidoreductase"/>
    <property type="match status" value="1"/>
</dbReference>
<dbReference type="SUPFAM" id="SSF57802">
    <property type="entry name" value="Rubredoxin-like"/>
    <property type="match status" value="1"/>
</dbReference>
<dbReference type="PROSITE" id="PS50902">
    <property type="entry name" value="FLAVODOXIN_LIKE"/>
    <property type="match status" value="1"/>
</dbReference>
<dbReference type="PROSITE" id="PS50903">
    <property type="entry name" value="RUBREDOXIN_LIKE"/>
    <property type="match status" value="1"/>
</dbReference>
<comment type="function">
    <text evidence="1">Anaerobic nitric oxide reductase; uses NADH to detoxify nitric oxide (NO), protecting several 4Fe-4S NO-sensitive enzymes. Has at least 2 reductase partners, only one of which (NorW, flavorubredoxin reductase) has been identified. NO probably binds to the di-iron center; electrons enter from the NorW at rubredoxin and are transferred sequentially to the FMN center and the di-iron center. Also able to function as an aerobic oxygen reductase.</text>
</comment>
<comment type="cofactor">
    <cofactor evidence="1">
        <name>Fe cation</name>
        <dbReference type="ChEBI" id="CHEBI:24875"/>
    </cofactor>
    <text evidence="1">Binds 3 Fe cations per monomer.</text>
</comment>
<comment type="cofactor">
    <cofactor evidence="1">
        <name>FMN</name>
        <dbReference type="ChEBI" id="CHEBI:58210"/>
    </cofactor>
    <text evidence="1">Binds 1 FMN per monomer.</text>
</comment>
<comment type="pathway">
    <text evidence="1">Nitrogen metabolism; nitric oxide reduction.</text>
</comment>
<comment type="subunit">
    <text evidence="1">Homotetramer.</text>
</comment>
<comment type="subcellular location">
    <subcellularLocation>
        <location evidence="1">Cytoplasm</location>
    </subcellularLocation>
</comment>
<comment type="similarity">
    <text evidence="1">In the N-terminal section; belongs to the zinc metallo-hydrolase group 3 family.</text>
</comment>
<evidence type="ECO:0000255" key="1">
    <source>
        <dbReference type="HAMAP-Rule" id="MF_01312"/>
    </source>
</evidence>
<sequence length="479" mass="54136">MSILVKNNIHWVGQRDWEVRDFHGTEYKTLRGSSYNSYLIREEKNVLIDTVDHKFSREFVQNLRSEIDLADIDYIIINHAEEDHAGALTELMAQIPDTPIYCTANAIDSINGHHHHPEWNFKVVKTGDTLDIGNGKQLIFVETPMLHWPDSMMTYMTGDAVLFSNDAFGQHYCDERLFNDEVDQTELFEQCQRYYANILTPFSRLVTPKITEILGFNLPVDMIATSHGVVWRDNPTQIVELYLKWAADYQEDRITIFYDTMSNNTRMMADAIAQGINEVDPNVAVKIFNVARSDKNEILTNVFRSKGVLVGTSTMNNVMMPKIAGLVEEMTGLRFRNKRASAFGSHGWSGGAVDRLSTRLQDAGFEMSLSLKAKWRPDLDALELCRQHGRDIARQWALAPLPETTQKTAPVEETTTCAAADLGPKMQCSVCQWIYDPALGEPLQDVAPGTPWSDVPDNFLCPECSLGKDVFDVLATEAK</sequence>
<keyword id="KW-0963">Cytoplasm</keyword>
<keyword id="KW-0249">Electron transport</keyword>
<keyword id="KW-0285">Flavoprotein</keyword>
<keyword id="KW-0288">FMN</keyword>
<keyword id="KW-0408">Iron</keyword>
<keyword id="KW-0479">Metal-binding</keyword>
<keyword id="KW-0560">Oxidoreductase</keyword>
<keyword id="KW-0813">Transport</keyword>
<protein>
    <recommendedName>
        <fullName evidence="1">Anaerobic nitric oxide reductase flavorubredoxin</fullName>
        <shortName evidence="1">FlRd</shortName>
        <shortName evidence="1">FlavoRb</shortName>
    </recommendedName>
</protein>
<organism>
    <name type="scientific">Salmonella paratyphi B (strain ATCC BAA-1250 / SPB7)</name>
    <dbReference type="NCBI Taxonomy" id="1016998"/>
    <lineage>
        <taxon>Bacteria</taxon>
        <taxon>Pseudomonadati</taxon>
        <taxon>Pseudomonadota</taxon>
        <taxon>Gammaproteobacteria</taxon>
        <taxon>Enterobacterales</taxon>
        <taxon>Enterobacteriaceae</taxon>
        <taxon>Salmonella</taxon>
    </lineage>
</organism>
<accession>A9N0D9</accession>
<proteinExistence type="inferred from homology"/>
<name>NORV_SALPB</name>
<gene>
    <name evidence="1" type="primary">norV</name>
    <name evidence="1" type="synonym">flrD</name>
    <name type="ordered locus">SPAB_03531</name>
</gene>
<reference key="1">
    <citation type="submission" date="2007-11" db="EMBL/GenBank/DDBJ databases">
        <authorList>
            <consortium name="The Salmonella enterica serovar Paratyphi B Genome Sequencing Project"/>
            <person name="McClelland M."/>
            <person name="Sanderson E.K."/>
            <person name="Porwollik S."/>
            <person name="Spieth J."/>
            <person name="Clifton W.S."/>
            <person name="Fulton R."/>
            <person name="Cordes M."/>
            <person name="Wollam A."/>
            <person name="Shah N."/>
            <person name="Pepin K."/>
            <person name="Bhonagiri V."/>
            <person name="Nash W."/>
            <person name="Johnson M."/>
            <person name="Thiruvilangam P."/>
            <person name="Wilson R."/>
        </authorList>
    </citation>
    <scope>NUCLEOTIDE SEQUENCE [LARGE SCALE GENOMIC DNA]</scope>
    <source>
        <strain>ATCC BAA-1250 / SPB7</strain>
    </source>
</reference>